<gene>
    <name type="ordered locus">Swol_0262</name>
</gene>
<proteinExistence type="inferred from homology"/>
<keyword id="KW-0067">ATP-binding</keyword>
<keyword id="KW-0342">GTP-binding</keyword>
<keyword id="KW-0547">Nucleotide-binding</keyword>
<keyword id="KW-1185">Reference proteome</keyword>
<name>Y262_SYNWW</name>
<evidence type="ECO:0000255" key="1">
    <source>
        <dbReference type="HAMAP-Rule" id="MF_00636"/>
    </source>
</evidence>
<reference key="1">
    <citation type="journal article" date="2010" name="Environ. Microbiol.">
        <title>The genome of Syntrophomonas wolfei: new insights into syntrophic metabolism and biohydrogen production.</title>
        <authorList>
            <person name="Sieber J.R."/>
            <person name="Sims D.R."/>
            <person name="Han C."/>
            <person name="Kim E."/>
            <person name="Lykidis A."/>
            <person name="Lapidus A.L."/>
            <person name="McDonnald E."/>
            <person name="Rohlin L."/>
            <person name="Culley D.E."/>
            <person name="Gunsalus R."/>
            <person name="McInerney M.J."/>
        </authorList>
    </citation>
    <scope>NUCLEOTIDE SEQUENCE [LARGE SCALE GENOMIC DNA]</scope>
    <source>
        <strain>DSM 2245B / Goettingen</strain>
    </source>
</reference>
<sequence length="294" mass="33626">MGEKNEELQILIITGLSGAGKTQAINCLEDIGYYCVDNLPPALMFKFIELSMQSEGIKKVALVIDVRGGDFFPDLSLVLEELEDSQINYQIIFLEASDEVLVRRFKESRRRHPLGSSSRLLEAIQEERRMLQELRGKAHFLIDTSNLSPRELKEKLDLRYSEDETLRFSASIVSFGYKLGLPMDSDLVIDVRFLPNPFYDPLMRTMTGKDPMVIDYVLESSVTKSFTRRFLNLLKYLIPYYIKEGKTNLAIAIGCTGGQHRSVVLADYTGKQLEKMGYNVIVRHRDIAKHKTEE</sequence>
<comment type="function">
    <text evidence="1">Displays ATPase and GTPase activities.</text>
</comment>
<comment type="similarity">
    <text evidence="1">Belongs to the RapZ-like family.</text>
</comment>
<accession>Q0B094</accession>
<feature type="chain" id="PRO_1000130791" description="Nucleotide-binding protein Swol_0262">
    <location>
        <begin position="1"/>
        <end position="294"/>
    </location>
</feature>
<feature type="binding site" evidence="1">
    <location>
        <begin position="15"/>
        <end position="22"/>
    </location>
    <ligand>
        <name>ATP</name>
        <dbReference type="ChEBI" id="CHEBI:30616"/>
    </ligand>
</feature>
<feature type="binding site" evidence="1">
    <location>
        <begin position="65"/>
        <end position="68"/>
    </location>
    <ligand>
        <name>GTP</name>
        <dbReference type="ChEBI" id="CHEBI:37565"/>
    </ligand>
</feature>
<protein>
    <recommendedName>
        <fullName evidence="1">Nucleotide-binding protein Swol_0262</fullName>
    </recommendedName>
</protein>
<dbReference type="EMBL" id="CP000448">
    <property type="protein sequence ID" value="ABI67610.1"/>
    <property type="molecule type" value="Genomic_DNA"/>
</dbReference>
<dbReference type="RefSeq" id="WP_011639719.1">
    <property type="nucleotide sequence ID" value="NC_008346.1"/>
</dbReference>
<dbReference type="SMR" id="Q0B094"/>
<dbReference type="STRING" id="335541.Swol_0262"/>
<dbReference type="KEGG" id="swo:Swol_0262"/>
<dbReference type="eggNOG" id="COG1660">
    <property type="taxonomic scope" value="Bacteria"/>
</dbReference>
<dbReference type="HOGENOM" id="CLU_059558_0_0_9"/>
<dbReference type="OrthoDB" id="9784461at2"/>
<dbReference type="Proteomes" id="UP000001968">
    <property type="component" value="Chromosome"/>
</dbReference>
<dbReference type="GO" id="GO:0005524">
    <property type="term" value="F:ATP binding"/>
    <property type="evidence" value="ECO:0007669"/>
    <property type="project" value="UniProtKB-UniRule"/>
</dbReference>
<dbReference type="GO" id="GO:0005525">
    <property type="term" value="F:GTP binding"/>
    <property type="evidence" value="ECO:0007669"/>
    <property type="project" value="UniProtKB-UniRule"/>
</dbReference>
<dbReference type="Gene3D" id="3.40.50.300">
    <property type="entry name" value="P-loop containing nucleotide triphosphate hydrolases"/>
    <property type="match status" value="1"/>
</dbReference>
<dbReference type="HAMAP" id="MF_00636">
    <property type="entry name" value="RapZ_like"/>
    <property type="match status" value="1"/>
</dbReference>
<dbReference type="InterPro" id="IPR027417">
    <property type="entry name" value="P-loop_NTPase"/>
</dbReference>
<dbReference type="InterPro" id="IPR005337">
    <property type="entry name" value="RapZ-like"/>
</dbReference>
<dbReference type="InterPro" id="IPR053930">
    <property type="entry name" value="RapZ-like_N"/>
</dbReference>
<dbReference type="InterPro" id="IPR053931">
    <property type="entry name" value="RapZ_C"/>
</dbReference>
<dbReference type="NCBIfam" id="NF003828">
    <property type="entry name" value="PRK05416.1"/>
    <property type="match status" value="1"/>
</dbReference>
<dbReference type="PANTHER" id="PTHR30448">
    <property type="entry name" value="RNASE ADAPTER PROTEIN RAPZ"/>
    <property type="match status" value="1"/>
</dbReference>
<dbReference type="PANTHER" id="PTHR30448:SF0">
    <property type="entry name" value="RNASE ADAPTER PROTEIN RAPZ"/>
    <property type="match status" value="1"/>
</dbReference>
<dbReference type="Pfam" id="PF22740">
    <property type="entry name" value="PapZ_C"/>
    <property type="match status" value="1"/>
</dbReference>
<dbReference type="Pfam" id="PF03668">
    <property type="entry name" value="RapZ-like_N"/>
    <property type="match status" value="1"/>
</dbReference>
<dbReference type="PIRSF" id="PIRSF005052">
    <property type="entry name" value="P-loopkin"/>
    <property type="match status" value="1"/>
</dbReference>
<dbReference type="SUPFAM" id="SSF52540">
    <property type="entry name" value="P-loop containing nucleoside triphosphate hydrolases"/>
    <property type="match status" value="1"/>
</dbReference>
<organism>
    <name type="scientific">Syntrophomonas wolfei subsp. wolfei (strain DSM 2245B / Goettingen)</name>
    <dbReference type="NCBI Taxonomy" id="335541"/>
    <lineage>
        <taxon>Bacteria</taxon>
        <taxon>Bacillati</taxon>
        <taxon>Bacillota</taxon>
        <taxon>Clostridia</taxon>
        <taxon>Eubacteriales</taxon>
        <taxon>Syntrophomonadaceae</taxon>
        <taxon>Syntrophomonas</taxon>
    </lineage>
</organism>